<name>YAGB_SCHPO</name>
<keyword id="KW-0963">Cytoplasm</keyword>
<keyword id="KW-1185">Reference proteome</keyword>
<reference key="1">
    <citation type="journal article" date="2002" name="Nature">
        <title>The genome sequence of Schizosaccharomyces pombe.</title>
        <authorList>
            <person name="Wood V."/>
            <person name="Gwilliam R."/>
            <person name="Rajandream M.A."/>
            <person name="Lyne M.H."/>
            <person name="Lyne R."/>
            <person name="Stewart A."/>
            <person name="Sgouros J.G."/>
            <person name="Peat N."/>
            <person name="Hayles J."/>
            <person name="Baker S.G."/>
            <person name="Basham D."/>
            <person name="Bowman S."/>
            <person name="Brooks K."/>
            <person name="Brown D."/>
            <person name="Brown S."/>
            <person name="Chillingworth T."/>
            <person name="Churcher C.M."/>
            <person name="Collins M."/>
            <person name="Connor R."/>
            <person name="Cronin A."/>
            <person name="Davis P."/>
            <person name="Feltwell T."/>
            <person name="Fraser A."/>
            <person name="Gentles S."/>
            <person name="Goble A."/>
            <person name="Hamlin N."/>
            <person name="Harris D.E."/>
            <person name="Hidalgo J."/>
            <person name="Hodgson G."/>
            <person name="Holroyd S."/>
            <person name="Hornsby T."/>
            <person name="Howarth S."/>
            <person name="Huckle E.J."/>
            <person name="Hunt S."/>
            <person name="Jagels K."/>
            <person name="James K.D."/>
            <person name="Jones L."/>
            <person name="Jones M."/>
            <person name="Leather S."/>
            <person name="McDonald S."/>
            <person name="McLean J."/>
            <person name="Mooney P."/>
            <person name="Moule S."/>
            <person name="Mungall K.L."/>
            <person name="Murphy L.D."/>
            <person name="Niblett D."/>
            <person name="Odell C."/>
            <person name="Oliver K."/>
            <person name="O'Neil S."/>
            <person name="Pearson D."/>
            <person name="Quail M.A."/>
            <person name="Rabbinowitsch E."/>
            <person name="Rutherford K.M."/>
            <person name="Rutter S."/>
            <person name="Saunders D."/>
            <person name="Seeger K."/>
            <person name="Sharp S."/>
            <person name="Skelton J."/>
            <person name="Simmonds M.N."/>
            <person name="Squares R."/>
            <person name="Squares S."/>
            <person name="Stevens K."/>
            <person name="Taylor K."/>
            <person name="Taylor R.G."/>
            <person name="Tivey A."/>
            <person name="Walsh S.V."/>
            <person name="Warren T."/>
            <person name="Whitehead S."/>
            <person name="Woodward J.R."/>
            <person name="Volckaert G."/>
            <person name="Aert R."/>
            <person name="Robben J."/>
            <person name="Grymonprez B."/>
            <person name="Weltjens I."/>
            <person name="Vanstreels E."/>
            <person name="Rieger M."/>
            <person name="Schaefer M."/>
            <person name="Mueller-Auer S."/>
            <person name="Gabel C."/>
            <person name="Fuchs M."/>
            <person name="Duesterhoeft A."/>
            <person name="Fritzc C."/>
            <person name="Holzer E."/>
            <person name="Moestl D."/>
            <person name="Hilbert H."/>
            <person name="Borzym K."/>
            <person name="Langer I."/>
            <person name="Beck A."/>
            <person name="Lehrach H."/>
            <person name="Reinhardt R."/>
            <person name="Pohl T.M."/>
            <person name="Eger P."/>
            <person name="Zimmermann W."/>
            <person name="Wedler H."/>
            <person name="Wambutt R."/>
            <person name="Purnelle B."/>
            <person name="Goffeau A."/>
            <person name="Cadieu E."/>
            <person name="Dreano S."/>
            <person name="Gloux S."/>
            <person name="Lelaure V."/>
            <person name="Mottier S."/>
            <person name="Galibert F."/>
            <person name="Aves S.J."/>
            <person name="Xiang Z."/>
            <person name="Hunt C."/>
            <person name="Moore K."/>
            <person name="Hurst S.M."/>
            <person name="Lucas M."/>
            <person name="Rochet M."/>
            <person name="Gaillardin C."/>
            <person name="Tallada V.A."/>
            <person name="Garzon A."/>
            <person name="Thode G."/>
            <person name="Daga R.R."/>
            <person name="Cruzado L."/>
            <person name="Jimenez J."/>
            <person name="Sanchez M."/>
            <person name="del Rey F."/>
            <person name="Benito J."/>
            <person name="Dominguez A."/>
            <person name="Revuelta J.L."/>
            <person name="Moreno S."/>
            <person name="Armstrong J."/>
            <person name="Forsburg S.L."/>
            <person name="Cerutti L."/>
            <person name="Lowe T."/>
            <person name="McCombie W.R."/>
            <person name="Paulsen I."/>
            <person name="Potashkin J."/>
            <person name="Shpakovski G.V."/>
            <person name="Ussery D."/>
            <person name="Barrell B.G."/>
            <person name="Nurse P."/>
        </authorList>
    </citation>
    <scope>NUCLEOTIDE SEQUENCE [LARGE SCALE GENOMIC DNA]</scope>
    <source>
        <strain>972 / ATCC 24843</strain>
    </source>
</reference>
<reference key="2">
    <citation type="journal article" date="2004" name="Mol. Genet. Genomics">
        <title>Two-hybrid search for proteins that interact with Sad1 and Kms1, two membrane-bound components of the spindle pole body in fission yeast.</title>
        <authorList>
            <person name="Miki F."/>
            <person name="Kurabayashi A."/>
            <person name="Tange Y."/>
            <person name="Okazaki K."/>
            <person name="Shimanuki M."/>
            <person name="Niwa O."/>
        </authorList>
    </citation>
    <scope>INTERACTION WITH SAD1</scope>
    <scope>SUBCELLULAR LOCATION</scope>
</reference>
<evidence type="ECO:0000256" key="1">
    <source>
        <dbReference type="SAM" id="MobiDB-lite"/>
    </source>
</evidence>
<evidence type="ECO:0000269" key="2">
    <source>
    </source>
</evidence>
<evidence type="ECO:0000305" key="3"/>
<comment type="subunit">
    <text evidence="2">Interacts with sad1.</text>
</comment>
<comment type="subcellular location">
    <subcellularLocation>
        <location evidence="2">Cytoplasm</location>
    </subcellularLocation>
</comment>
<comment type="similarity">
    <text evidence="3">To yeast YGL082w.</text>
</comment>
<organism>
    <name type="scientific">Schizosaccharomyces pombe (strain 972 / ATCC 24843)</name>
    <name type="common">Fission yeast</name>
    <dbReference type="NCBI Taxonomy" id="284812"/>
    <lineage>
        <taxon>Eukaryota</taxon>
        <taxon>Fungi</taxon>
        <taxon>Dikarya</taxon>
        <taxon>Ascomycota</taxon>
        <taxon>Taphrinomycotina</taxon>
        <taxon>Schizosaccharomycetes</taxon>
        <taxon>Schizosaccharomycetales</taxon>
        <taxon>Schizosaccharomycetaceae</taxon>
        <taxon>Schizosaccharomyces</taxon>
    </lineage>
</organism>
<feature type="chain" id="PRO_0000116430" description="Uncharacterized protein C12G12.11c">
    <location>
        <begin position="1"/>
        <end position="365"/>
    </location>
</feature>
<feature type="region of interest" description="Disordered" evidence="1">
    <location>
        <begin position="1"/>
        <end position="31"/>
    </location>
</feature>
<feature type="region of interest" description="Disordered" evidence="1">
    <location>
        <begin position="308"/>
        <end position="365"/>
    </location>
</feature>
<feature type="compositionally biased region" description="Basic and acidic residues" evidence="1">
    <location>
        <begin position="1"/>
        <end position="27"/>
    </location>
</feature>
<feature type="compositionally biased region" description="Basic and acidic residues" evidence="1">
    <location>
        <begin position="315"/>
        <end position="339"/>
    </location>
</feature>
<feature type="compositionally biased region" description="Polar residues" evidence="1">
    <location>
        <begin position="340"/>
        <end position="353"/>
    </location>
</feature>
<sequence length="365" mass="42280">MDNVQEHDPDTQEHNNETQNHKQEDHSNSYQTRTIPFIEPLSREYQKRIILCQTVNGPCPIIALSNALILKSNVDRPFELPKKRYITPDELTEYLVEFAKAYGLCKNQQSLQDKLTSMHFGQQLNPCLYDIEKFEYGHEIFCTFGVRLVHGWILSDDMGLSDEDLSYLRKLEYYEKVADTFAERRSLLEMQEPLTEQQQDFLNNSTCVDKVMENRYTMQFLTNAGLKKILELVGPGEIVVVFRSSHFSTMYSNPDSFAQFTLVTDSGYARTGEDVVWETFDSQTVETGNGELCAANFIPAVYVLNQRKEEKKKRAKDDEQYAKRLAKEEEERGKKETPKKASNTPRRNKSNTQKSRKQSENCLIS</sequence>
<gene>
    <name type="ORF">SPAC12G12.11c</name>
</gene>
<dbReference type="EMBL" id="CU329670">
    <property type="protein sequence ID" value="CAA91506.1"/>
    <property type="molecule type" value="Genomic_DNA"/>
</dbReference>
<dbReference type="PIR" id="S62542">
    <property type="entry name" value="S62542"/>
</dbReference>
<dbReference type="SMR" id="Q09874"/>
<dbReference type="BioGRID" id="279480">
    <property type="interactions" value="2"/>
</dbReference>
<dbReference type="FunCoup" id="Q09874">
    <property type="interactions" value="24"/>
</dbReference>
<dbReference type="IntAct" id="Q09874">
    <property type="interactions" value="1"/>
</dbReference>
<dbReference type="STRING" id="284812.Q09874"/>
<dbReference type="SwissPalm" id="Q09874"/>
<dbReference type="PaxDb" id="4896-SPAC12G12.11c.1"/>
<dbReference type="EnsemblFungi" id="SPAC12G12.11c.1">
    <property type="protein sequence ID" value="SPAC12G12.11c.1:pep"/>
    <property type="gene ID" value="SPAC12G12.11c"/>
</dbReference>
<dbReference type="KEGG" id="spo:2543045"/>
<dbReference type="PomBase" id="SPAC12G12.11c"/>
<dbReference type="VEuPathDB" id="FungiDB:SPAC12G12.11c"/>
<dbReference type="eggNOG" id="KOG2427">
    <property type="taxonomic scope" value="Eukaryota"/>
</dbReference>
<dbReference type="HOGENOM" id="CLU_794910_0_0_1"/>
<dbReference type="InParanoid" id="Q09874"/>
<dbReference type="OMA" id="MHFGQQL"/>
<dbReference type="PhylomeDB" id="Q09874"/>
<dbReference type="PRO" id="PR:Q09874"/>
<dbReference type="Proteomes" id="UP000002485">
    <property type="component" value="Chromosome I"/>
</dbReference>
<dbReference type="GO" id="GO:0005829">
    <property type="term" value="C:cytosol"/>
    <property type="evidence" value="ECO:0007005"/>
    <property type="project" value="PomBase"/>
</dbReference>
<dbReference type="GO" id="GO:0005634">
    <property type="term" value="C:nucleus"/>
    <property type="evidence" value="ECO:0007005"/>
    <property type="project" value="PomBase"/>
</dbReference>
<dbReference type="GO" id="GO:0016807">
    <property type="term" value="F:cysteine-type carboxypeptidase activity"/>
    <property type="evidence" value="ECO:0000318"/>
    <property type="project" value="GO_Central"/>
</dbReference>
<dbReference type="GO" id="GO:0004843">
    <property type="term" value="F:cysteine-type deubiquitinase activity"/>
    <property type="evidence" value="ECO:0007669"/>
    <property type="project" value="InterPro"/>
</dbReference>
<dbReference type="GO" id="GO:1990380">
    <property type="term" value="F:K48-linked deubiquitinase activity"/>
    <property type="evidence" value="ECO:0000318"/>
    <property type="project" value="GO_Central"/>
</dbReference>
<dbReference type="InterPro" id="IPR007518">
    <property type="entry name" value="MINDY"/>
</dbReference>
<dbReference type="InterPro" id="IPR033979">
    <property type="entry name" value="MINDY_domain"/>
</dbReference>
<dbReference type="PANTHER" id="PTHR18063">
    <property type="entry name" value="NF-E2 INDUCIBLE PROTEIN"/>
    <property type="match status" value="1"/>
</dbReference>
<dbReference type="PANTHER" id="PTHR18063:SF6">
    <property type="entry name" value="UBIQUITIN CARBOXYL-TERMINAL HYDROLASE"/>
    <property type="match status" value="1"/>
</dbReference>
<dbReference type="Pfam" id="PF04424">
    <property type="entry name" value="MINDY_DUB"/>
    <property type="match status" value="1"/>
</dbReference>
<protein>
    <recommendedName>
        <fullName>Uncharacterized protein C12G12.11c</fullName>
    </recommendedName>
</protein>
<accession>Q09874</accession>
<proteinExistence type="evidence at protein level"/>